<comment type="function">
    <text evidence="1">The RuvA-RuvB-RuvC complex processes Holliday junction (HJ) DNA during genetic recombination and DNA repair, while the RuvA-RuvB complex plays an important role in the rescue of blocked DNA replication forks via replication fork reversal (RFR). RuvA specifically binds to HJ cruciform DNA, conferring on it an open structure. The RuvB hexamer acts as an ATP-dependent pump, pulling dsDNA into and through the RuvAB complex. HJ branch migration allows RuvC to scan DNA until it finds its consensus sequence, where it cleaves and resolves the cruciform DNA.</text>
</comment>
<comment type="subunit">
    <text evidence="1">Homotetramer. Forms an RuvA(8)-RuvB(12)-Holliday junction (HJ) complex. HJ DNA is sandwiched between 2 RuvA tetramers; dsDNA enters through RuvA and exits via RuvB. An RuvB hexamer assembles on each DNA strand where it exits the tetramer. Each RuvB hexamer is contacted by two RuvA subunits (via domain III) on 2 adjacent RuvB subunits; this complex drives branch migration. In the full resolvosome a probable DNA-RuvA(4)-RuvB(12)-RuvC(2) complex forms which resolves the HJ.</text>
</comment>
<comment type="subcellular location">
    <subcellularLocation>
        <location evidence="1">Cytoplasm</location>
    </subcellularLocation>
</comment>
<comment type="domain">
    <text evidence="1">Has three domains with a flexible linker between the domains II and III and assumes an 'L' shape. Domain III is highly mobile and contacts RuvB.</text>
</comment>
<comment type="similarity">
    <text evidence="1">Belongs to the RuvA family.</text>
</comment>
<sequence length="203" mass="22102">MIGRLRGIILEKQPPLVLLEVGGVGYEVHMPMTCFYELPESGKEATVFTHFVVREDAQLLYGFNNKQERTLFKELIKTNGVGPKLALAILSGMSAQQFVNAVEREEPAALVKLPGIGKKTAERLIVEMKDRFKGLHGDLFTPAADLVLTSPASPATDDAEQEAVAALVALGYKPQEASRMVSKIARPDASSETLIREALRAAL</sequence>
<keyword id="KW-0963">Cytoplasm</keyword>
<keyword id="KW-0227">DNA damage</keyword>
<keyword id="KW-0233">DNA recombination</keyword>
<keyword id="KW-0234">DNA repair</keyword>
<keyword id="KW-0238">DNA-binding</keyword>
<keyword id="KW-1185">Reference proteome</keyword>
<protein>
    <recommendedName>
        <fullName evidence="1">Holliday junction branch migration complex subunit RuvA</fullName>
    </recommendedName>
</protein>
<gene>
    <name evidence="1" type="primary">ruvA</name>
    <name type="ordered locus">CKO_01099</name>
</gene>
<organism>
    <name type="scientific">Citrobacter koseri (strain ATCC BAA-895 / CDC 4225-83 / SGSC4696)</name>
    <dbReference type="NCBI Taxonomy" id="290338"/>
    <lineage>
        <taxon>Bacteria</taxon>
        <taxon>Pseudomonadati</taxon>
        <taxon>Pseudomonadota</taxon>
        <taxon>Gammaproteobacteria</taxon>
        <taxon>Enterobacterales</taxon>
        <taxon>Enterobacteriaceae</taxon>
        <taxon>Citrobacter</taxon>
    </lineage>
</organism>
<proteinExistence type="inferred from homology"/>
<accession>A8AFI0</accession>
<feature type="chain" id="PRO_1000002428" description="Holliday junction branch migration complex subunit RuvA">
    <location>
        <begin position="1"/>
        <end position="203"/>
    </location>
</feature>
<feature type="region of interest" description="Domain I" evidence="1">
    <location>
        <begin position="1"/>
        <end position="64"/>
    </location>
</feature>
<feature type="region of interest" description="Domain II" evidence="1">
    <location>
        <begin position="65"/>
        <end position="142"/>
    </location>
</feature>
<feature type="region of interest" description="Flexible linker" evidence="1">
    <location>
        <begin position="143"/>
        <end position="154"/>
    </location>
</feature>
<feature type="region of interest" description="Domain III" evidence="1">
    <location>
        <begin position="155"/>
        <end position="203"/>
    </location>
</feature>
<evidence type="ECO:0000255" key="1">
    <source>
        <dbReference type="HAMAP-Rule" id="MF_00031"/>
    </source>
</evidence>
<reference key="1">
    <citation type="submission" date="2007-08" db="EMBL/GenBank/DDBJ databases">
        <authorList>
            <consortium name="The Citrobacter koseri Genome Sequencing Project"/>
            <person name="McClelland M."/>
            <person name="Sanderson E.K."/>
            <person name="Porwollik S."/>
            <person name="Spieth J."/>
            <person name="Clifton W.S."/>
            <person name="Latreille P."/>
            <person name="Courtney L."/>
            <person name="Wang C."/>
            <person name="Pepin K."/>
            <person name="Bhonagiri V."/>
            <person name="Nash W."/>
            <person name="Johnson M."/>
            <person name="Thiruvilangam P."/>
            <person name="Wilson R."/>
        </authorList>
    </citation>
    <scope>NUCLEOTIDE SEQUENCE [LARGE SCALE GENOMIC DNA]</scope>
    <source>
        <strain>ATCC BAA-895 / CDC 4225-83 / SGSC4696</strain>
    </source>
</reference>
<name>RUVA_CITK8</name>
<dbReference type="EMBL" id="CP000822">
    <property type="protein sequence ID" value="ABV12242.1"/>
    <property type="molecule type" value="Genomic_DNA"/>
</dbReference>
<dbReference type="RefSeq" id="WP_012131997.1">
    <property type="nucleotide sequence ID" value="NC_009792.1"/>
</dbReference>
<dbReference type="SMR" id="A8AFI0"/>
<dbReference type="STRING" id="290338.CKO_01099"/>
<dbReference type="GeneID" id="45135248"/>
<dbReference type="KEGG" id="cko:CKO_01099"/>
<dbReference type="HOGENOM" id="CLU_087936_0_0_6"/>
<dbReference type="OrthoDB" id="5293449at2"/>
<dbReference type="Proteomes" id="UP000008148">
    <property type="component" value="Chromosome"/>
</dbReference>
<dbReference type="GO" id="GO:0005737">
    <property type="term" value="C:cytoplasm"/>
    <property type="evidence" value="ECO:0007669"/>
    <property type="project" value="UniProtKB-SubCell"/>
</dbReference>
<dbReference type="GO" id="GO:0009379">
    <property type="term" value="C:Holliday junction helicase complex"/>
    <property type="evidence" value="ECO:0007669"/>
    <property type="project" value="InterPro"/>
</dbReference>
<dbReference type="GO" id="GO:0048476">
    <property type="term" value="C:Holliday junction resolvase complex"/>
    <property type="evidence" value="ECO:0007669"/>
    <property type="project" value="UniProtKB-UniRule"/>
</dbReference>
<dbReference type="GO" id="GO:0005524">
    <property type="term" value="F:ATP binding"/>
    <property type="evidence" value="ECO:0007669"/>
    <property type="project" value="InterPro"/>
</dbReference>
<dbReference type="GO" id="GO:0000400">
    <property type="term" value="F:four-way junction DNA binding"/>
    <property type="evidence" value="ECO:0007669"/>
    <property type="project" value="UniProtKB-UniRule"/>
</dbReference>
<dbReference type="GO" id="GO:0009378">
    <property type="term" value="F:four-way junction helicase activity"/>
    <property type="evidence" value="ECO:0007669"/>
    <property type="project" value="InterPro"/>
</dbReference>
<dbReference type="GO" id="GO:0006310">
    <property type="term" value="P:DNA recombination"/>
    <property type="evidence" value="ECO:0007669"/>
    <property type="project" value="UniProtKB-UniRule"/>
</dbReference>
<dbReference type="GO" id="GO:0006281">
    <property type="term" value="P:DNA repair"/>
    <property type="evidence" value="ECO:0007669"/>
    <property type="project" value="UniProtKB-UniRule"/>
</dbReference>
<dbReference type="CDD" id="cd14332">
    <property type="entry name" value="UBA_RuvA_C"/>
    <property type="match status" value="1"/>
</dbReference>
<dbReference type="FunFam" id="1.10.150.20:FF:000012">
    <property type="entry name" value="Holliday junction ATP-dependent DNA helicase RuvA"/>
    <property type="match status" value="1"/>
</dbReference>
<dbReference type="FunFam" id="1.10.8.10:FF:000008">
    <property type="entry name" value="Holliday junction ATP-dependent DNA helicase RuvA"/>
    <property type="match status" value="1"/>
</dbReference>
<dbReference type="FunFam" id="2.40.50.140:FF:000083">
    <property type="entry name" value="Holliday junction ATP-dependent DNA helicase RuvA"/>
    <property type="match status" value="1"/>
</dbReference>
<dbReference type="Gene3D" id="1.10.150.20">
    <property type="entry name" value="5' to 3' exonuclease, C-terminal subdomain"/>
    <property type="match status" value="1"/>
</dbReference>
<dbReference type="Gene3D" id="1.10.8.10">
    <property type="entry name" value="DNA helicase RuvA subunit, C-terminal domain"/>
    <property type="match status" value="1"/>
</dbReference>
<dbReference type="Gene3D" id="2.40.50.140">
    <property type="entry name" value="Nucleic acid-binding proteins"/>
    <property type="match status" value="1"/>
</dbReference>
<dbReference type="HAMAP" id="MF_00031">
    <property type="entry name" value="DNA_HJ_migration_RuvA"/>
    <property type="match status" value="1"/>
</dbReference>
<dbReference type="InterPro" id="IPR013849">
    <property type="entry name" value="DNA_helicase_Holl-junc_RuvA_I"/>
</dbReference>
<dbReference type="InterPro" id="IPR003583">
    <property type="entry name" value="Hlx-hairpin-Hlx_DNA-bd_motif"/>
</dbReference>
<dbReference type="InterPro" id="IPR012340">
    <property type="entry name" value="NA-bd_OB-fold"/>
</dbReference>
<dbReference type="InterPro" id="IPR000085">
    <property type="entry name" value="RuvA"/>
</dbReference>
<dbReference type="InterPro" id="IPR010994">
    <property type="entry name" value="RuvA_2-like"/>
</dbReference>
<dbReference type="InterPro" id="IPR011114">
    <property type="entry name" value="RuvA_C"/>
</dbReference>
<dbReference type="InterPro" id="IPR036267">
    <property type="entry name" value="RuvA_C_sf"/>
</dbReference>
<dbReference type="NCBIfam" id="TIGR00084">
    <property type="entry name" value="ruvA"/>
    <property type="match status" value="1"/>
</dbReference>
<dbReference type="Pfam" id="PF14520">
    <property type="entry name" value="HHH_5"/>
    <property type="match status" value="1"/>
</dbReference>
<dbReference type="Pfam" id="PF07499">
    <property type="entry name" value="RuvA_C"/>
    <property type="match status" value="1"/>
</dbReference>
<dbReference type="Pfam" id="PF01330">
    <property type="entry name" value="RuvA_N"/>
    <property type="match status" value="1"/>
</dbReference>
<dbReference type="SMART" id="SM00278">
    <property type="entry name" value="HhH1"/>
    <property type="match status" value="2"/>
</dbReference>
<dbReference type="SUPFAM" id="SSF46929">
    <property type="entry name" value="DNA helicase RuvA subunit, C-terminal domain"/>
    <property type="match status" value="1"/>
</dbReference>
<dbReference type="SUPFAM" id="SSF50249">
    <property type="entry name" value="Nucleic acid-binding proteins"/>
    <property type="match status" value="1"/>
</dbReference>
<dbReference type="SUPFAM" id="SSF47781">
    <property type="entry name" value="RuvA domain 2-like"/>
    <property type="match status" value="1"/>
</dbReference>